<reference key="1">
    <citation type="journal article" date="1993" name="Dev. Dyn.">
        <title>Developmental expression of four novel serine/threonine kinase receptors homologous to the activin/transforming growth factor-beta type II receptor family.</title>
        <authorList>
            <person name="He W.-W."/>
            <person name="Gustafson M.L."/>
            <person name="Hirobe S."/>
            <person name="Donahoe P.K."/>
        </authorList>
    </citation>
    <scope>NUCLEOTIDE SEQUENCE [MRNA]</scope>
    <source>
        <strain>Sprague-Dawley</strain>
        <tissue>Urogenital ridge</tissue>
    </source>
</reference>
<reference key="2">
    <citation type="journal article" date="1995" name="Exp. Cell Res.">
        <title>Molecular characterization of a type I serine-threonine kinase receptor for TGF-beta and activin in the rat pituitary tumor cell line GH3.</title>
        <authorList>
            <person name="Takumi T."/>
            <person name="Moustakas A."/>
            <person name="Lin H.Y."/>
            <person name="Lodish H.F."/>
        </authorList>
    </citation>
    <scope>NUCLEOTIDE SEQUENCE [MRNA]</scope>
    <source>
        <tissue>Pituitary</tissue>
    </source>
</reference>
<comment type="function">
    <text evidence="1">Transmembrane serine/threonine kinase activin type-1 receptor forming an activin receptor complex with activin receptor type-2 (ACVR2A or ACVR2B). Transduces the activin signal from the cell surface to the cytoplasm and is thus regulating a many physiological and pathological processes including neuronal differentiation and neuronal survival, hair follicle development and cycling, FSH production by the pituitary gland, wound healing, extracellular matrix production, immunosuppression and carcinogenesis. Activin is also thought to have a paracrine or autocrine role in follicular development in the ovary. Within the receptor complex, type-2 receptors (ACVR2A and/or ACVR2B) act as a primary activin receptors whereas the type-1 receptors like ACVR1B act as downstream transducers of activin signals. Activin binds to type-2 receptor at the plasma membrane and activates its serine-threonine kinase. The activated receptor type-2 then phosphorylates and activates the type-1 receptor such as ACVR1B. Once activated, the type-1 receptor binds and phosphorylates the SMAD proteins SMAD2 and SMAD3, on serine residues of the C-terminal tail. Soon after their association with the activin receptor and subsequent phosphorylation, SMAD2 and SMAD3 are released into the cytoplasm where they interact with the common partner SMAD4. This SMAD complex translocates into the nucleus where it mediates activin-induced transcription. Inhibitory SMAD7, which is recruited to ACVR1B through FKBP1A, can prevent the association of SMAD2 and SMAD3 with the activin receptor complex, thereby blocking the activin signal. Activin signal transduction is also antagonized by the binding to the receptor of inhibin-B via the IGSF1 inhibin coreceptor. ACVR1B also phosphorylates TDP2 (By similarity).</text>
</comment>
<comment type="catalytic activity">
    <reaction>
        <text>L-threonyl-[receptor-protein] + ATP = O-phospho-L-threonyl-[receptor-protein] + ADP + H(+)</text>
        <dbReference type="Rhea" id="RHEA:44880"/>
        <dbReference type="Rhea" id="RHEA-COMP:11024"/>
        <dbReference type="Rhea" id="RHEA-COMP:11025"/>
        <dbReference type="ChEBI" id="CHEBI:15378"/>
        <dbReference type="ChEBI" id="CHEBI:30013"/>
        <dbReference type="ChEBI" id="CHEBI:30616"/>
        <dbReference type="ChEBI" id="CHEBI:61977"/>
        <dbReference type="ChEBI" id="CHEBI:456216"/>
        <dbReference type="EC" id="2.7.11.30"/>
    </reaction>
</comment>
<comment type="catalytic activity">
    <reaction>
        <text>L-seryl-[receptor-protein] + ATP = O-phospho-L-seryl-[receptor-protein] + ADP + H(+)</text>
        <dbReference type="Rhea" id="RHEA:18673"/>
        <dbReference type="Rhea" id="RHEA-COMP:11022"/>
        <dbReference type="Rhea" id="RHEA-COMP:11023"/>
        <dbReference type="ChEBI" id="CHEBI:15378"/>
        <dbReference type="ChEBI" id="CHEBI:29999"/>
        <dbReference type="ChEBI" id="CHEBI:30616"/>
        <dbReference type="ChEBI" id="CHEBI:83421"/>
        <dbReference type="ChEBI" id="CHEBI:456216"/>
        <dbReference type="EC" id="2.7.11.30"/>
    </reaction>
</comment>
<comment type="cofactor">
    <cofactor evidence="1">
        <name>Mg(2+)</name>
        <dbReference type="ChEBI" id="CHEBI:18420"/>
    </cofactor>
    <cofactor evidence="1">
        <name>Mn(2+)</name>
        <dbReference type="ChEBI" id="CHEBI:29035"/>
    </cofactor>
</comment>
<comment type="activity regulation">
    <text evidence="1">Activin receptor type-2 (ACVR2A or ACVR2B) activates the type-1 receptor through phosphorylation of its regulatory GS domain.</text>
</comment>
<comment type="subunit">
    <text evidence="2 3">Forms an activin receptor complex with activin receptor type-2 (ACVR2A or ACVR2B) (By similarity). Part of a complex consisting of MAGI2/ARIP1, ACVR2A, ACVR1B and SMAD3 (By similarity). Interacts with SMAD2 and SMAD3 (By similarity). Interacts with SMAD7 (By similarity). Interacts with FKBP1A (By similarity). Interacts with IGSF1 (By similarity). Interacts with CRIPTO (By similarity). Interacts with TDP2 (By similarity). Interacts with TSC22D1/TSC-22 (By similarity).</text>
</comment>
<comment type="subcellular location">
    <subcellularLocation>
        <location evidence="1">Cell membrane</location>
        <topology evidence="1">Single-pass type I membrane protein</topology>
    </subcellularLocation>
</comment>
<comment type="tissue specificity">
    <text>Urogenital ridge, testis, ovary, brain and lungs.</text>
</comment>
<comment type="domain">
    <text evidence="1">The GS domain is a 30-amino-acid sequence adjacent to the N-terminal boundary of the kinase domain and highly conserved in all other known type-1 receptors but not in type-2 receptors. The GS domain is the site of activation through phosphorylation by the II receptors (By similarity).</text>
</comment>
<comment type="PTM">
    <text evidence="1">Autophosphorylated. Phosphorylated by activin receptor type-2 (ACVR2A or ACVR2B) in response to activin-binding at serine and threonine residues in the GS domain. Phosphorylation of ACVR1B by activin receptor type-2 regulates association with SMAD7 (By similarity).</text>
</comment>
<comment type="PTM">
    <text evidence="1">Ubiquitinated. Level of ubiquitination is regulated by the SMAD7-SMURF1 complex (By similarity).</text>
</comment>
<comment type="PTM">
    <text evidence="1">Ubiquitinated.</text>
</comment>
<comment type="similarity">
    <text evidence="8">Belongs to the protein kinase superfamily. TKL Ser/Thr protein kinase family. TGFB receptor subfamily.</text>
</comment>
<sequence length="505" mass="56805">MAESAGASSFFPLVVLLLAGSGGSGPRGIQALLCACTSCLQTNYTCETDGACMVSIFNLDGMEHHVRTCIPKVELVPAGKPFYCLSSEDLRNTHCCYIDFCNKIDLRVPSGHLKEPEHPSMWGPVELVGIIAGPVFLLFLIIIIVFLVINYHQRVYHNRQRLDMEDPSCEMCLSKDKTLQDLVYDLSTSGSGSGLPLFVQRTVARTIVLQEIIGKGRFGEVWRGRWRGGDVAVKIFSSREERSWFREAEIYQTVMLRHENILGFIAADNKDNGTWTQLWLVSDYHEHGSLFDYLNRYTVTIEGMIKLALSAASGLAHLHMEIVGTQGKPGIAHRDLKSKNILVKKNGMCAIADLGLAVRHDAVTDTIDIAPNQRVGTKRYMAPEVLDETINMKHFDSFKCADIYALGLVYWEIARRCNSGGVHEEYQLPYYDLVPSDPSIEEMRKVVCDQKLRPNVPNWWQSYEALRVMGKMMRECWYANGAARLTALRIKKTLSQLSVQEDVKI</sequence>
<feature type="signal peptide" evidence="4">
    <location>
        <begin position="1"/>
        <end position="23"/>
    </location>
</feature>
<feature type="chain" id="PRO_0000024419" description="Activin receptor type-1B">
    <location>
        <begin position="24"/>
        <end position="505"/>
    </location>
</feature>
<feature type="topological domain" description="Extracellular" evidence="4">
    <location>
        <begin position="24"/>
        <end position="126"/>
    </location>
</feature>
<feature type="transmembrane region" description="Helical" evidence="4">
    <location>
        <begin position="127"/>
        <end position="149"/>
    </location>
</feature>
<feature type="topological domain" description="Cytoplasmic" evidence="4">
    <location>
        <begin position="150"/>
        <end position="505"/>
    </location>
</feature>
<feature type="domain" description="GS" evidence="6">
    <location>
        <begin position="177"/>
        <end position="206"/>
    </location>
</feature>
<feature type="domain" description="Protein kinase" evidence="5">
    <location>
        <begin position="207"/>
        <end position="497"/>
    </location>
</feature>
<feature type="active site" description="Proton acceptor" evidence="5 7">
    <location>
        <position position="335"/>
    </location>
</feature>
<feature type="binding site" evidence="5">
    <location>
        <begin position="213"/>
        <end position="221"/>
    </location>
    <ligand>
        <name>ATP</name>
        <dbReference type="ChEBI" id="CHEBI:30616"/>
    </ligand>
</feature>
<feature type="binding site" evidence="5">
    <location>
        <position position="234"/>
    </location>
    <ligand>
        <name>ATP</name>
        <dbReference type="ChEBI" id="CHEBI:30616"/>
    </ligand>
</feature>
<feature type="modified residue" description="Phosphotyrosine" evidence="2">
    <location>
        <position position="380"/>
    </location>
</feature>
<feature type="glycosylation site" description="N-linked (GlcNAc...) asparagine" evidence="4">
    <location>
        <position position="43"/>
    </location>
</feature>
<name>ACV1B_RAT</name>
<proteinExistence type="evidence at transcript level"/>
<gene>
    <name type="primary">Acvr1b</name>
    <name type="synonym">Acvrlk4</name>
    <name type="synonym">Alk4</name>
</gene>
<protein>
    <recommendedName>
        <fullName>Activin receptor type-1B</fullName>
        <ecNumber>2.7.11.30</ecNumber>
    </recommendedName>
    <alternativeName>
        <fullName>Activin receptor type IB</fullName>
        <shortName>ACTR-IB</shortName>
    </alternativeName>
    <alternativeName>
        <fullName>Activin receptor-like kinase 4</fullName>
        <shortName>ALK-4</shortName>
    </alternativeName>
    <alternativeName>
        <fullName>Serine/threonine-protein kinase receptor R2</fullName>
        <shortName>SKR2</shortName>
    </alternativeName>
</protein>
<evidence type="ECO:0000250" key="1"/>
<evidence type="ECO:0000250" key="2">
    <source>
        <dbReference type="UniProtKB" id="P36896"/>
    </source>
</evidence>
<evidence type="ECO:0000250" key="3">
    <source>
        <dbReference type="UniProtKB" id="Q61271"/>
    </source>
</evidence>
<evidence type="ECO:0000255" key="4"/>
<evidence type="ECO:0000255" key="5">
    <source>
        <dbReference type="PROSITE-ProRule" id="PRU00159"/>
    </source>
</evidence>
<evidence type="ECO:0000255" key="6">
    <source>
        <dbReference type="PROSITE-ProRule" id="PRU00585"/>
    </source>
</evidence>
<evidence type="ECO:0000255" key="7">
    <source>
        <dbReference type="PROSITE-ProRule" id="PRU10027"/>
    </source>
</evidence>
<evidence type="ECO:0000305" key="8"/>
<dbReference type="EC" id="2.7.11.30"/>
<dbReference type="EMBL" id="S76466">
    <property type="protein sequence ID" value="AAB33045.1"/>
    <property type="molecule type" value="mRNA"/>
</dbReference>
<dbReference type="RefSeq" id="NP_954700.1">
    <property type="nucleotide sequence ID" value="NM_199230.2"/>
</dbReference>
<dbReference type="SMR" id="P80202"/>
<dbReference type="BioGRID" id="248033">
    <property type="interactions" value="1"/>
</dbReference>
<dbReference type="FunCoup" id="P80202">
    <property type="interactions" value="2367"/>
</dbReference>
<dbReference type="STRING" id="10116.ENSRNOP00000009345"/>
<dbReference type="GlyCosmos" id="P80202">
    <property type="glycosylation" value="1 site, No reported glycans"/>
</dbReference>
<dbReference type="GlyGen" id="P80202">
    <property type="glycosylation" value="1 site"/>
</dbReference>
<dbReference type="iPTMnet" id="P80202"/>
<dbReference type="PhosphoSitePlus" id="P80202"/>
<dbReference type="PaxDb" id="10116-ENSRNOP00000009345"/>
<dbReference type="Ensembl" id="ENSRNOT00000009345.8">
    <property type="protein sequence ID" value="ENSRNOP00000009345.6"/>
    <property type="gene ID" value="ENSRNOG00000006934.8"/>
</dbReference>
<dbReference type="GeneID" id="29381"/>
<dbReference type="KEGG" id="rno:29381"/>
<dbReference type="UCSC" id="RGD:735207">
    <property type="organism name" value="rat"/>
</dbReference>
<dbReference type="AGR" id="RGD:735207"/>
<dbReference type="CTD" id="91"/>
<dbReference type="RGD" id="735207">
    <property type="gene designation" value="Acvr1b"/>
</dbReference>
<dbReference type="eggNOG" id="KOG2052">
    <property type="taxonomic scope" value="Eukaryota"/>
</dbReference>
<dbReference type="GeneTree" id="ENSGT00940000157032"/>
<dbReference type="HOGENOM" id="CLU_000288_8_1_1"/>
<dbReference type="InParanoid" id="P80202"/>
<dbReference type="OrthoDB" id="27925at9989"/>
<dbReference type="PhylomeDB" id="P80202"/>
<dbReference type="BRENDA" id="2.7.10.2">
    <property type="organism ID" value="5301"/>
</dbReference>
<dbReference type="Reactome" id="R-RNO-1502540">
    <property type="pathway name" value="Signaling by Activin"/>
</dbReference>
<dbReference type="PRO" id="PR:P80202"/>
<dbReference type="Proteomes" id="UP000002494">
    <property type="component" value="Chromosome 7"/>
</dbReference>
<dbReference type="Bgee" id="ENSRNOG00000006934">
    <property type="expression patterns" value="Expressed in frontal cortex and 18 other cell types or tissues"/>
</dbReference>
<dbReference type="GO" id="GO:0048179">
    <property type="term" value="C:activin receptor complex"/>
    <property type="evidence" value="ECO:0000266"/>
    <property type="project" value="RGD"/>
</dbReference>
<dbReference type="GO" id="GO:0009986">
    <property type="term" value="C:cell surface"/>
    <property type="evidence" value="ECO:0000266"/>
    <property type="project" value="RGD"/>
</dbReference>
<dbReference type="GO" id="GO:0005886">
    <property type="term" value="C:plasma membrane"/>
    <property type="evidence" value="ECO:0000266"/>
    <property type="project" value="RGD"/>
</dbReference>
<dbReference type="GO" id="GO:0043235">
    <property type="term" value="C:receptor complex"/>
    <property type="evidence" value="ECO:0000266"/>
    <property type="project" value="RGD"/>
</dbReference>
<dbReference type="GO" id="GO:0048185">
    <property type="term" value="F:activin binding"/>
    <property type="evidence" value="ECO:0000266"/>
    <property type="project" value="RGD"/>
</dbReference>
<dbReference type="GO" id="GO:0017002">
    <property type="term" value="F:activin receptor activity"/>
    <property type="evidence" value="ECO:0000266"/>
    <property type="project" value="RGD"/>
</dbReference>
<dbReference type="GO" id="GO:0016361">
    <property type="term" value="F:activin receptor activity, type I"/>
    <property type="evidence" value="ECO:0000266"/>
    <property type="project" value="RGD"/>
</dbReference>
<dbReference type="GO" id="GO:0005524">
    <property type="term" value="F:ATP binding"/>
    <property type="evidence" value="ECO:0000266"/>
    <property type="project" value="RGD"/>
</dbReference>
<dbReference type="GO" id="GO:0070411">
    <property type="term" value="F:I-SMAD binding"/>
    <property type="evidence" value="ECO:0000266"/>
    <property type="project" value="RGD"/>
</dbReference>
<dbReference type="GO" id="GO:0034711">
    <property type="term" value="F:inhibin binding"/>
    <property type="evidence" value="ECO:0000266"/>
    <property type="project" value="RGD"/>
</dbReference>
<dbReference type="GO" id="GO:0046872">
    <property type="term" value="F:metal ion binding"/>
    <property type="evidence" value="ECO:0007669"/>
    <property type="project" value="UniProtKB-KW"/>
</dbReference>
<dbReference type="GO" id="GO:0004674">
    <property type="term" value="F:protein serine/threonine kinase activity"/>
    <property type="evidence" value="ECO:0000266"/>
    <property type="project" value="RGD"/>
</dbReference>
<dbReference type="GO" id="GO:0046332">
    <property type="term" value="F:SMAD binding"/>
    <property type="evidence" value="ECO:0000266"/>
    <property type="project" value="RGD"/>
</dbReference>
<dbReference type="GO" id="GO:0004675">
    <property type="term" value="F:transmembrane receptor protein serine/threonine kinase activity"/>
    <property type="evidence" value="ECO:0000304"/>
    <property type="project" value="RGD"/>
</dbReference>
<dbReference type="GO" id="GO:0031625">
    <property type="term" value="F:ubiquitin protein ligase binding"/>
    <property type="evidence" value="ECO:0000266"/>
    <property type="project" value="RGD"/>
</dbReference>
<dbReference type="GO" id="GO:0032924">
    <property type="term" value="P:activin receptor signaling pathway"/>
    <property type="evidence" value="ECO:0000315"/>
    <property type="project" value="RGD"/>
</dbReference>
<dbReference type="GO" id="GO:0060936">
    <property type="term" value="P:cardiac fibroblast cell development"/>
    <property type="evidence" value="ECO:0000315"/>
    <property type="project" value="RGD"/>
</dbReference>
<dbReference type="GO" id="GO:0071363">
    <property type="term" value="P:cellular response to growth factor stimulus"/>
    <property type="evidence" value="ECO:0000318"/>
    <property type="project" value="GO_Central"/>
</dbReference>
<dbReference type="GO" id="GO:0046545">
    <property type="term" value="P:development of primary female sexual characteristics"/>
    <property type="evidence" value="ECO:0000270"/>
    <property type="project" value="RGD"/>
</dbReference>
<dbReference type="GO" id="GO:0097191">
    <property type="term" value="P:extrinsic apoptotic signaling pathway"/>
    <property type="evidence" value="ECO:0000266"/>
    <property type="project" value="RGD"/>
</dbReference>
<dbReference type="GO" id="GO:0000082">
    <property type="term" value="P:G1/S transition of mitotic cell cycle"/>
    <property type="evidence" value="ECO:0000266"/>
    <property type="project" value="RGD"/>
</dbReference>
<dbReference type="GO" id="GO:0001942">
    <property type="term" value="P:hair follicle development"/>
    <property type="evidence" value="ECO:0000266"/>
    <property type="project" value="RGD"/>
</dbReference>
<dbReference type="GO" id="GO:0001701">
    <property type="term" value="P:in utero embryonic development"/>
    <property type="evidence" value="ECO:0000266"/>
    <property type="project" value="RGD"/>
</dbReference>
<dbReference type="GO" id="GO:0030308">
    <property type="term" value="P:negative regulation of cell growth"/>
    <property type="evidence" value="ECO:0000266"/>
    <property type="project" value="RGD"/>
</dbReference>
<dbReference type="GO" id="GO:0010629">
    <property type="term" value="P:negative regulation of gene expression"/>
    <property type="evidence" value="ECO:0000266"/>
    <property type="project" value="RGD"/>
</dbReference>
<dbReference type="GO" id="GO:0030279">
    <property type="term" value="P:negative regulation of ossification"/>
    <property type="evidence" value="ECO:0000266"/>
    <property type="project" value="RGD"/>
</dbReference>
<dbReference type="GO" id="GO:0007399">
    <property type="term" value="P:nervous system development"/>
    <property type="evidence" value="ECO:0000318"/>
    <property type="project" value="GO_Central"/>
</dbReference>
<dbReference type="GO" id="GO:0038092">
    <property type="term" value="P:nodal signaling pathway"/>
    <property type="evidence" value="ECO:0000266"/>
    <property type="project" value="RGD"/>
</dbReference>
<dbReference type="GO" id="GO:0032927">
    <property type="term" value="P:positive regulation of activin receptor signaling pathway"/>
    <property type="evidence" value="ECO:0000266"/>
    <property type="project" value="RGD"/>
</dbReference>
<dbReference type="GO" id="GO:0032967">
    <property type="term" value="P:positive regulation of collagen biosynthetic process"/>
    <property type="evidence" value="ECO:0000315"/>
    <property type="project" value="RGD"/>
</dbReference>
<dbReference type="GO" id="GO:0045648">
    <property type="term" value="P:positive regulation of erythrocyte differentiation"/>
    <property type="evidence" value="ECO:0000266"/>
    <property type="project" value="RGD"/>
</dbReference>
<dbReference type="GO" id="GO:0010628">
    <property type="term" value="P:positive regulation of gene expression"/>
    <property type="evidence" value="ECO:0000266"/>
    <property type="project" value="RGD"/>
</dbReference>
<dbReference type="GO" id="GO:0045944">
    <property type="term" value="P:positive regulation of transcription by RNA polymerase II"/>
    <property type="evidence" value="ECO:0000315"/>
    <property type="project" value="RGD"/>
</dbReference>
<dbReference type="GO" id="GO:1901165">
    <property type="term" value="P:positive regulation of trophoblast cell migration"/>
    <property type="evidence" value="ECO:0000266"/>
    <property type="project" value="RGD"/>
</dbReference>
<dbReference type="GO" id="GO:0006355">
    <property type="term" value="P:regulation of DNA-templated transcription"/>
    <property type="evidence" value="ECO:0000266"/>
    <property type="project" value="RGD"/>
</dbReference>
<dbReference type="GO" id="GO:0009966">
    <property type="term" value="P:regulation of signal transduction"/>
    <property type="evidence" value="ECO:0000266"/>
    <property type="project" value="RGD"/>
</dbReference>
<dbReference type="GO" id="GO:0014823">
    <property type="term" value="P:response to activity"/>
    <property type="evidence" value="ECO:0000270"/>
    <property type="project" value="RGD"/>
</dbReference>
<dbReference type="GO" id="GO:0007165">
    <property type="term" value="P:signal transduction"/>
    <property type="evidence" value="ECO:0000266"/>
    <property type="project" value="RGD"/>
</dbReference>
<dbReference type="CDD" id="cd14143">
    <property type="entry name" value="STKc_TGFbR1_ACVR1b_ACVR1c"/>
    <property type="match status" value="1"/>
</dbReference>
<dbReference type="CDD" id="cd23536">
    <property type="entry name" value="TFP_LU_ECD_ALK4"/>
    <property type="match status" value="1"/>
</dbReference>
<dbReference type="FunFam" id="1.10.510.10:FF:000045">
    <property type="entry name" value="Receptor protein serine/threonine kinase"/>
    <property type="match status" value="1"/>
</dbReference>
<dbReference type="FunFam" id="2.10.60.10:FF:000010">
    <property type="entry name" value="Receptor protein serine/threonine kinase"/>
    <property type="match status" value="1"/>
</dbReference>
<dbReference type="FunFam" id="3.30.200.20:FF:000023">
    <property type="entry name" value="Receptor protein serine/threonine kinase"/>
    <property type="match status" value="1"/>
</dbReference>
<dbReference type="Gene3D" id="2.10.60.10">
    <property type="entry name" value="CD59"/>
    <property type="match status" value="1"/>
</dbReference>
<dbReference type="Gene3D" id="3.30.200.20">
    <property type="entry name" value="Phosphorylase Kinase, domain 1"/>
    <property type="match status" value="1"/>
</dbReference>
<dbReference type="Gene3D" id="1.10.510.10">
    <property type="entry name" value="Transferase(Phosphotransferase) domain 1"/>
    <property type="match status" value="1"/>
</dbReference>
<dbReference type="InterPro" id="IPR000472">
    <property type="entry name" value="Activin_recp"/>
</dbReference>
<dbReference type="InterPro" id="IPR003605">
    <property type="entry name" value="GS_dom"/>
</dbReference>
<dbReference type="InterPro" id="IPR011009">
    <property type="entry name" value="Kinase-like_dom_sf"/>
</dbReference>
<dbReference type="InterPro" id="IPR000719">
    <property type="entry name" value="Prot_kinase_dom"/>
</dbReference>
<dbReference type="InterPro" id="IPR017441">
    <property type="entry name" value="Protein_kinase_ATP_BS"/>
</dbReference>
<dbReference type="InterPro" id="IPR008271">
    <property type="entry name" value="Ser/Thr_kinase_AS"/>
</dbReference>
<dbReference type="InterPro" id="IPR045860">
    <property type="entry name" value="Snake_toxin-like_sf"/>
</dbReference>
<dbReference type="InterPro" id="IPR000333">
    <property type="entry name" value="TGFB_receptor"/>
</dbReference>
<dbReference type="PANTHER" id="PTHR23255:SF22">
    <property type="entry name" value="ACTIVIN RECEPTOR TYPE-1B"/>
    <property type="match status" value="1"/>
</dbReference>
<dbReference type="PANTHER" id="PTHR23255">
    <property type="entry name" value="TRANSFORMING GROWTH FACTOR-BETA RECEPTOR TYPE I AND II"/>
    <property type="match status" value="1"/>
</dbReference>
<dbReference type="Pfam" id="PF01064">
    <property type="entry name" value="Activin_recp"/>
    <property type="match status" value="1"/>
</dbReference>
<dbReference type="Pfam" id="PF00069">
    <property type="entry name" value="Pkinase"/>
    <property type="match status" value="1"/>
</dbReference>
<dbReference type="Pfam" id="PF08515">
    <property type="entry name" value="TGF_beta_GS"/>
    <property type="match status" value="1"/>
</dbReference>
<dbReference type="SMART" id="SM00467">
    <property type="entry name" value="GS"/>
    <property type="match status" value="1"/>
</dbReference>
<dbReference type="SMART" id="SM00220">
    <property type="entry name" value="S_TKc"/>
    <property type="match status" value="1"/>
</dbReference>
<dbReference type="SUPFAM" id="SSF56112">
    <property type="entry name" value="Protein kinase-like (PK-like)"/>
    <property type="match status" value="1"/>
</dbReference>
<dbReference type="SUPFAM" id="SSF57302">
    <property type="entry name" value="Snake toxin-like"/>
    <property type="match status" value="1"/>
</dbReference>
<dbReference type="PROSITE" id="PS51256">
    <property type="entry name" value="GS"/>
    <property type="match status" value="1"/>
</dbReference>
<dbReference type="PROSITE" id="PS00107">
    <property type="entry name" value="PROTEIN_KINASE_ATP"/>
    <property type="match status" value="1"/>
</dbReference>
<dbReference type="PROSITE" id="PS50011">
    <property type="entry name" value="PROTEIN_KINASE_DOM"/>
    <property type="match status" value="1"/>
</dbReference>
<dbReference type="PROSITE" id="PS00108">
    <property type="entry name" value="PROTEIN_KINASE_ST"/>
    <property type="match status" value="1"/>
</dbReference>
<keyword id="KW-0067">ATP-binding</keyword>
<keyword id="KW-1003">Cell membrane</keyword>
<keyword id="KW-0325">Glycoprotein</keyword>
<keyword id="KW-0418">Kinase</keyword>
<keyword id="KW-0460">Magnesium</keyword>
<keyword id="KW-0464">Manganese</keyword>
<keyword id="KW-0472">Membrane</keyword>
<keyword id="KW-0479">Metal-binding</keyword>
<keyword id="KW-0547">Nucleotide-binding</keyword>
<keyword id="KW-0597">Phosphoprotein</keyword>
<keyword id="KW-0675">Receptor</keyword>
<keyword id="KW-1185">Reference proteome</keyword>
<keyword id="KW-0723">Serine/threonine-protein kinase</keyword>
<keyword id="KW-0732">Signal</keyword>
<keyword id="KW-0808">Transferase</keyword>
<keyword id="KW-0812">Transmembrane</keyword>
<keyword id="KW-1133">Transmembrane helix</keyword>
<keyword id="KW-0832">Ubl conjugation</keyword>
<organism>
    <name type="scientific">Rattus norvegicus</name>
    <name type="common">Rat</name>
    <dbReference type="NCBI Taxonomy" id="10116"/>
    <lineage>
        <taxon>Eukaryota</taxon>
        <taxon>Metazoa</taxon>
        <taxon>Chordata</taxon>
        <taxon>Craniata</taxon>
        <taxon>Vertebrata</taxon>
        <taxon>Euteleostomi</taxon>
        <taxon>Mammalia</taxon>
        <taxon>Eutheria</taxon>
        <taxon>Euarchontoglires</taxon>
        <taxon>Glires</taxon>
        <taxon>Rodentia</taxon>
        <taxon>Myomorpha</taxon>
        <taxon>Muroidea</taxon>
        <taxon>Muridae</taxon>
        <taxon>Murinae</taxon>
        <taxon>Rattus</taxon>
    </lineage>
</organism>
<accession>P80202</accession>